<name>UXAC_PHOV8</name>
<accession>A6L4U4</accession>
<dbReference type="EC" id="5.3.1.12" evidence="1"/>
<dbReference type="EMBL" id="CP000139">
    <property type="protein sequence ID" value="ABR40708.1"/>
    <property type="molecule type" value="Genomic_DNA"/>
</dbReference>
<dbReference type="RefSeq" id="WP_005846562.1">
    <property type="nucleotide sequence ID" value="NZ_JANSWM010000088.1"/>
</dbReference>
<dbReference type="SMR" id="A6L4U4"/>
<dbReference type="STRING" id="435590.BVU_3074"/>
<dbReference type="PaxDb" id="435590-BVU_3074"/>
<dbReference type="GeneID" id="82153713"/>
<dbReference type="KEGG" id="bvu:BVU_3074"/>
<dbReference type="eggNOG" id="COG1904">
    <property type="taxonomic scope" value="Bacteria"/>
</dbReference>
<dbReference type="HOGENOM" id="CLU_044465_1_0_10"/>
<dbReference type="BioCyc" id="BVUL435590:G1G59-3198-MONOMER"/>
<dbReference type="UniPathway" id="UPA00246"/>
<dbReference type="Proteomes" id="UP000002861">
    <property type="component" value="Chromosome"/>
</dbReference>
<dbReference type="GO" id="GO:0008880">
    <property type="term" value="F:glucuronate isomerase activity"/>
    <property type="evidence" value="ECO:0007669"/>
    <property type="project" value="UniProtKB-UniRule"/>
</dbReference>
<dbReference type="GO" id="GO:0019698">
    <property type="term" value="P:D-galacturonate catabolic process"/>
    <property type="evidence" value="ECO:0007669"/>
    <property type="project" value="TreeGrafter"/>
</dbReference>
<dbReference type="GO" id="GO:0042840">
    <property type="term" value="P:D-glucuronate catabolic process"/>
    <property type="evidence" value="ECO:0007669"/>
    <property type="project" value="TreeGrafter"/>
</dbReference>
<dbReference type="Gene3D" id="3.20.20.140">
    <property type="entry name" value="Metal-dependent hydrolases"/>
    <property type="match status" value="1"/>
</dbReference>
<dbReference type="Gene3D" id="1.10.2020.10">
    <property type="entry name" value="uronate isomerase, domain 2, chain A"/>
    <property type="match status" value="1"/>
</dbReference>
<dbReference type="HAMAP" id="MF_00675">
    <property type="entry name" value="UxaC"/>
    <property type="match status" value="1"/>
</dbReference>
<dbReference type="InterPro" id="IPR032466">
    <property type="entry name" value="Metal_Hydrolase"/>
</dbReference>
<dbReference type="InterPro" id="IPR003766">
    <property type="entry name" value="Uronate_isomerase"/>
</dbReference>
<dbReference type="NCBIfam" id="NF002794">
    <property type="entry name" value="PRK02925.1"/>
    <property type="match status" value="1"/>
</dbReference>
<dbReference type="PANTHER" id="PTHR30068">
    <property type="entry name" value="URONATE ISOMERASE"/>
    <property type="match status" value="1"/>
</dbReference>
<dbReference type="PANTHER" id="PTHR30068:SF4">
    <property type="entry name" value="URONATE ISOMERASE"/>
    <property type="match status" value="1"/>
</dbReference>
<dbReference type="Pfam" id="PF02614">
    <property type="entry name" value="UxaC"/>
    <property type="match status" value="1"/>
</dbReference>
<dbReference type="SUPFAM" id="SSF51556">
    <property type="entry name" value="Metallo-dependent hydrolases"/>
    <property type="match status" value="1"/>
</dbReference>
<sequence length="468" mass="54307">MKNFMDENFLLQTETAQKLYHEHAAKMPIIDYHCHLIPQMVADDYQFKSLTEIWLGGDHYKWRAMRTNGVDERYCTGKDTTDWEKFEKWAETVPYTFRNPLYHWTHLELKTAFGINKVLNPKTAREIFDECNEKLAKPEYSARGMMRRYHVETVCTTDDPVDSLEYHIKTRESGFEIKMLPTWRPDKAMAVEVPADFRAYMEKLSAVSGVTISSFDDMVAALRKRHDFFAEQGCKLSDHGIEEFYAEDYTDAEINAIFNKVYGGTELTKEEILKFKSAMLIVFGEMDWEKGWTQQFHYGAIRNNNTKMFKLLGPDTGFDSIGEFTTAKAMAKFLDRLNTEGKLTKTILYNLNPCANEVIATMLGNFQDGTIPGKIQFGSGWWFLDQKDGMEKQMNALSLLGLLSRFVGMLTDSRSFLSYPRHEYFRRTLCNLLGNDVENGEIPACEIERVNQMVEDICYNNAKKFFQF</sequence>
<feature type="chain" id="PRO_1000044762" description="Uronate isomerase">
    <location>
        <begin position="1"/>
        <end position="468"/>
    </location>
</feature>
<proteinExistence type="inferred from homology"/>
<evidence type="ECO:0000255" key="1">
    <source>
        <dbReference type="HAMAP-Rule" id="MF_00675"/>
    </source>
</evidence>
<protein>
    <recommendedName>
        <fullName evidence="1">Uronate isomerase</fullName>
        <ecNumber evidence="1">5.3.1.12</ecNumber>
    </recommendedName>
    <alternativeName>
        <fullName evidence="1">Glucuronate isomerase</fullName>
    </alternativeName>
    <alternativeName>
        <fullName evidence="1">Uronic isomerase</fullName>
    </alternativeName>
</protein>
<gene>
    <name evidence="1" type="primary">uxaC</name>
    <name type="ordered locus">BVU_3074</name>
</gene>
<keyword id="KW-0413">Isomerase</keyword>
<comment type="catalytic activity">
    <reaction evidence="1">
        <text>D-glucuronate = D-fructuronate</text>
        <dbReference type="Rhea" id="RHEA:13049"/>
        <dbReference type="ChEBI" id="CHEBI:58720"/>
        <dbReference type="ChEBI" id="CHEBI:59863"/>
        <dbReference type="EC" id="5.3.1.12"/>
    </reaction>
</comment>
<comment type="catalytic activity">
    <reaction evidence="1">
        <text>aldehydo-D-galacturonate = keto-D-tagaturonate</text>
        <dbReference type="Rhea" id="RHEA:27702"/>
        <dbReference type="ChEBI" id="CHEBI:12952"/>
        <dbReference type="ChEBI" id="CHEBI:17886"/>
        <dbReference type="EC" id="5.3.1.12"/>
    </reaction>
</comment>
<comment type="pathway">
    <text evidence="1">Carbohydrate metabolism; pentose and glucuronate interconversion.</text>
</comment>
<comment type="similarity">
    <text evidence="1">Belongs to the metallo-dependent hydrolases superfamily. Uronate isomerase family.</text>
</comment>
<reference key="1">
    <citation type="journal article" date="2007" name="PLoS Biol.">
        <title>Evolution of symbiotic bacteria in the distal human intestine.</title>
        <authorList>
            <person name="Xu J."/>
            <person name="Mahowald M.A."/>
            <person name="Ley R.E."/>
            <person name="Lozupone C.A."/>
            <person name="Hamady M."/>
            <person name="Martens E.C."/>
            <person name="Henrissat B."/>
            <person name="Coutinho P.M."/>
            <person name="Minx P."/>
            <person name="Latreille P."/>
            <person name="Cordum H."/>
            <person name="Van Brunt A."/>
            <person name="Kim K."/>
            <person name="Fulton R.S."/>
            <person name="Fulton L.A."/>
            <person name="Clifton S.W."/>
            <person name="Wilson R.K."/>
            <person name="Knight R.D."/>
            <person name="Gordon J.I."/>
        </authorList>
    </citation>
    <scope>NUCLEOTIDE SEQUENCE [LARGE SCALE GENOMIC DNA]</scope>
    <source>
        <strain>ATCC 8482 / DSM 1447 / JCM 5826 / CCUG 4940 / NBRC 14291 / NCTC 11154</strain>
    </source>
</reference>
<organism>
    <name type="scientific">Phocaeicola vulgatus (strain ATCC 8482 / DSM 1447 / JCM 5826 / CCUG 4940 / NBRC 14291 / NCTC 11154)</name>
    <name type="common">Bacteroides vulgatus</name>
    <dbReference type="NCBI Taxonomy" id="435590"/>
    <lineage>
        <taxon>Bacteria</taxon>
        <taxon>Pseudomonadati</taxon>
        <taxon>Bacteroidota</taxon>
        <taxon>Bacteroidia</taxon>
        <taxon>Bacteroidales</taxon>
        <taxon>Bacteroidaceae</taxon>
        <taxon>Phocaeicola</taxon>
    </lineage>
</organism>